<gene>
    <name type="primary">queA</name>
    <name type="ordered locus">PMM0406</name>
</gene>
<feature type="chain" id="PRO_0000165424" description="S-adenosylmethionine:tRNA ribosyltransferase-isomerase">
    <location>
        <begin position="1"/>
        <end position="374"/>
    </location>
</feature>
<dbReference type="EC" id="2.4.99.17"/>
<dbReference type="EMBL" id="BX548174">
    <property type="protein sequence ID" value="CAE18865.1"/>
    <property type="molecule type" value="Genomic_DNA"/>
</dbReference>
<dbReference type="RefSeq" id="WP_011132042.1">
    <property type="nucleotide sequence ID" value="NC_005072.1"/>
</dbReference>
<dbReference type="SMR" id="Q7V2R3"/>
<dbReference type="STRING" id="59919.PMM0406"/>
<dbReference type="KEGG" id="pmm:PMM0406"/>
<dbReference type="eggNOG" id="COG0809">
    <property type="taxonomic scope" value="Bacteria"/>
</dbReference>
<dbReference type="HOGENOM" id="CLU_039110_1_0_3"/>
<dbReference type="OrthoDB" id="9805933at2"/>
<dbReference type="UniPathway" id="UPA00392"/>
<dbReference type="Proteomes" id="UP000001026">
    <property type="component" value="Chromosome"/>
</dbReference>
<dbReference type="GO" id="GO:0005737">
    <property type="term" value="C:cytoplasm"/>
    <property type="evidence" value="ECO:0007669"/>
    <property type="project" value="UniProtKB-SubCell"/>
</dbReference>
<dbReference type="GO" id="GO:0051075">
    <property type="term" value="F:S-adenosylmethionine:tRNA ribosyltransferase-isomerase activity"/>
    <property type="evidence" value="ECO:0007669"/>
    <property type="project" value="UniProtKB-EC"/>
</dbReference>
<dbReference type="GO" id="GO:0008616">
    <property type="term" value="P:queuosine biosynthetic process"/>
    <property type="evidence" value="ECO:0007669"/>
    <property type="project" value="UniProtKB-UniRule"/>
</dbReference>
<dbReference type="GO" id="GO:0002099">
    <property type="term" value="P:tRNA wobble guanine modification"/>
    <property type="evidence" value="ECO:0007669"/>
    <property type="project" value="TreeGrafter"/>
</dbReference>
<dbReference type="Gene3D" id="2.40.10.240">
    <property type="entry name" value="QueA-like"/>
    <property type="match status" value="1"/>
</dbReference>
<dbReference type="Gene3D" id="3.40.1780.10">
    <property type="entry name" value="QueA-like"/>
    <property type="match status" value="1"/>
</dbReference>
<dbReference type="HAMAP" id="MF_00113">
    <property type="entry name" value="QueA"/>
    <property type="match status" value="1"/>
</dbReference>
<dbReference type="InterPro" id="IPR003699">
    <property type="entry name" value="QueA"/>
</dbReference>
<dbReference type="InterPro" id="IPR042118">
    <property type="entry name" value="QueA_dom1"/>
</dbReference>
<dbReference type="InterPro" id="IPR042119">
    <property type="entry name" value="QueA_dom2"/>
</dbReference>
<dbReference type="InterPro" id="IPR036100">
    <property type="entry name" value="QueA_sf"/>
</dbReference>
<dbReference type="NCBIfam" id="NF001140">
    <property type="entry name" value="PRK00147.1"/>
    <property type="match status" value="1"/>
</dbReference>
<dbReference type="NCBIfam" id="TIGR00113">
    <property type="entry name" value="queA"/>
    <property type="match status" value="1"/>
</dbReference>
<dbReference type="PANTHER" id="PTHR30307">
    <property type="entry name" value="S-ADENOSYLMETHIONINE:TRNA RIBOSYLTRANSFERASE-ISOMERASE"/>
    <property type="match status" value="1"/>
</dbReference>
<dbReference type="PANTHER" id="PTHR30307:SF0">
    <property type="entry name" value="S-ADENOSYLMETHIONINE:TRNA RIBOSYLTRANSFERASE-ISOMERASE"/>
    <property type="match status" value="1"/>
</dbReference>
<dbReference type="Pfam" id="PF02547">
    <property type="entry name" value="Queuosine_synth"/>
    <property type="match status" value="1"/>
</dbReference>
<dbReference type="SUPFAM" id="SSF111337">
    <property type="entry name" value="QueA-like"/>
    <property type="match status" value="1"/>
</dbReference>
<proteinExistence type="inferred from homology"/>
<protein>
    <recommendedName>
        <fullName>S-adenosylmethionine:tRNA ribosyltransferase-isomerase</fullName>
        <ecNumber>2.4.99.17</ecNumber>
    </recommendedName>
    <alternativeName>
        <fullName>Queuosine biosynthesis protein QueA</fullName>
    </alternativeName>
</protein>
<evidence type="ECO:0000250" key="1"/>
<evidence type="ECO:0000305" key="2"/>
<comment type="function">
    <text evidence="1">Synthesizes oQ from preQ1 in a single S-adenosylmethionine-requiring step. The ribosyl moiety of AdoMet is transferred and isomerized to the epoxycyclopentane residue of oQ (By similarity).</text>
</comment>
<comment type="catalytic activity">
    <reaction>
        <text>7-aminomethyl-7-carbaguanosine(34) in tRNA + S-adenosyl-L-methionine = epoxyqueuosine(34) in tRNA + adenine + L-methionine + 2 H(+)</text>
        <dbReference type="Rhea" id="RHEA:32155"/>
        <dbReference type="Rhea" id="RHEA-COMP:10342"/>
        <dbReference type="Rhea" id="RHEA-COMP:18582"/>
        <dbReference type="ChEBI" id="CHEBI:15378"/>
        <dbReference type="ChEBI" id="CHEBI:16708"/>
        <dbReference type="ChEBI" id="CHEBI:57844"/>
        <dbReference type="ChEBI" id="CHEBI:59789"/>
        <dbReference type="ChEBI" id="CHEBI:82833"/>
        <dbReference type="ChEBI" id="CHEBI:194443"/>
        <dbReference type="EC" id="2.4.99.17"/>
    </reaction>
</comment>
<comment type="pathway">
    <text>tRNA modification; tRNA-queuosine biosynthesis.</text>
</comment>
<comment type="subcellular location">
    <subcellularLocation>
        <location evidence="2">Cytoplasm</location>
    </subcellularLocation>
</comment>
<comment type="similarity">
    <text evidence="2">Belongs to the QueA family.</text>
</comment>
<organism>
    <name type="scientific">Prochlorococcus marinus subsp. pastoris (strain CCMP1986 / NIES-2087 / MED4)</name>
    <dbReference type="NCBI Taxonomy" id="59919"/>
    <lineage>
        <taxon>Bacteria</taxon>
        <taxon>Bacillati</taxon>
        <taxon>Cyanobacteriota</taxon>
        <taxon>Cyanophyceae</taxon>
        <taxon>Synechococcales</taxon>
        <taxon>Prochlorococcaceae</taxon>
        <taxon>Prochlorococcus</taxon>
    </lineage>
</organism>
<keyword id="KW-0963">Cytoplasm</keyword>
<keyword id="KW-0671">Queuosine biosynthesis</keyword>
<keyword id="KW-0949">S-adenosyl-L-methionine</keyword>
<keyword id="KW-0808">Transferase</keyword>
<accession>Q7V2R3</accession>
<name>QUEA_PROMP</name>
<sequence>MNFEIHNEEIDHKLEAYDYILDETLIANKPSKVRHESRLMIVRDSSLEEDFTTNKYTKNLLDELRKGDLVVVNDTKVMKARLKVELENGKLVELLVLEKADQSTWLCLARPAKKLKINSQLNLKSSLAKDIKLHISGTDKETGGRFIKFPENINDLISMNNLLDIYGETPLPPYIKSAEEESFHENSYQTEYASNPGAVAAPTAGLHLSKSLISNLKKKGILVMPITLHVGYGTFKPIDQEDLSNLKLHKEWVRVSSEVVEEIKRVKKTDRRVIAIGTTSVRALESCYSYEMGDLIPIDKYVDLVIKPGYKFKVVDGLLTNFHLPKSSLLLLVSAMIGRERLLNLYKKAIREKFRFFSYGDAMYISPDSFLVKK</sequence>
<reference key="1">
    <citation type="journal article" date="2003" name="Nature">
        <title>Genome divergence in two Prochlorococcus ecotypes reflects oceanic niche differentiation.</title>
        <authorList>
            <person name="Rocap G."/>
            <person name="Larimer F.W."/>
            <person name="Lamerdin J.E."/>
            <person name="Malfatti S."/>
            <person name="Chain P."/>
            <person name="Ahlgren N.A."/>
            <person name="Arellano A."/>
            <person name="Coleman M."/>
            <person name="Hauser L."/>
            <person name="Hess W.R."/>
            <person name="Johnson Z.I."/>
            <person name="Land M.L."/>
            <person name="Lindell D."/>
            <person name="Post A.F."/>
            <person name="Regala W."/>
            <person name="Shah M."/>
            <person name="Shaw S.L."/>
            <person name="Steglich C."/>
            <person name="Sullivan M.B."/>
            <person name="Ting C.S."/>
            <person name="Tolonen A."/>
            <person name="Webb E.A."/>
            <person name="Zinser E.R."/>
            <person name="Chisholm S.W."/>
        </authorList>
    </citation>
    <scope>NUCLEOTIDE SEQUENCE [LARGE SCALE GENOMIC DNA]</scope>
    <source>
        <strain>CCMP1986 / NIES-2087 / MED4</strain>
    </source>
</reference>